<protein>
    <recommendedName>
        <fullName evidence="1">Glutamate--tRNA ligase</fullName>
        <ecNumber evidence="1">6.1.1.17</ecNumber>
    </recommendedName>
    <alternativeName>
        <fullName evidence="1">Glutamyl-tRNA synthetase</fullName>
        <shortName evidence="1">GluRS</shortName>
    </alternativeName>
</protein>
<sequence length="503" mass="57362">MQATPGQRVRTRFAPSPTGHLHVGGLRTALYNYLYAKSMGGDFIVRIEDTDQARKVEGAERSLLNTLEVTGIVPDESFIHGGNFGPYVQSERLGIYSKYCEQLLEQKQAYYCFSTAEELEANRKLQMKQGMQPKYDRKWLPEEMGGNMPESEIRRKREEGAPFVVRMKVPDYISIMFEDMIRGPIEFDSATVDDQVLMKSDGFPTYHFASIIDDHLMEISHVIRGEEWLSSMPKHILLYEFFGWEPPKVAHLPLLLNPDRSKLSKRQGDVAAEDFISKGYSPEAIINFVALLGWNEGEGCEREVYSLDELKDKFTLRRVGKAGAVFNVEKLGWLEKQYIKARPASEIISAIKPLLQAELAKKETGMDADRLVSDDYLGQVIELMRERVNFEHEFISFSRYFYFDPEEFDEKAVAKRWVDDTNEVLGEFIEVLENTADFSADNIEAALKAFVAPREKKPAFLIHPVRILTSGVGFGPSLYHMLEVLGKETVIRRLRKGIGVVGK</sequence>
<comment type="function">
    <text evidence="1">Catalyzes the attachment of glutamate to tRNA(Glu) in a two-step reaction: glutamate is first activated by ATP to form Glu-AMP and then transferred to the acceptor end of tRNA(Glu).</text>
</comment>
<comment type="catalytic activity">
    <reaction evidence="1">
        <text>tRNA(Glu) + L-glutamate + ATP = L-glutamyl-tRNA(Glu) + AMP + diphosphate</text>
        <dbReference type="Rhea" id="RHEA:23540"/>
        <dbReference type="Rhea" id="RHEA-COMP:9663"/>
        <dbReference type="Rhea" id="RHEA-COMP:9680"/>
        <dbReference type="ChEBI" id="CHEBI:29985"/>
        <dbReference type="ChEBI" id="CHEBI:30616"/>
        <dbReference type="ChEBI" id="CHEBI:33019"/>
        <dbReference type="ChEBI" id="CHEBI:78442"/>
        <dbReference type="ChEBI" id="CHEBI:78520"/>
        <dbReference type="ChEBI" id="CHEBI:456215"/>
        <dbReference type="EC" id="6.1.1.17"/>
    </reaction>
</comment>
<comment type="subunit">
    <text evidence="1">Monomer.</text>
</comment>
<comment type="subcellular location">
    <subcellularLocation>
        <location evidence="1">Cytoplasm</location>
    </subcellularLocation>
</comment>
<comment type="similarity">
    <text evidence="1">Belongs to the class-I aminoacyl-tRNA synthetase family. Glutamate--tRNA ligase type 1 subfamily.</text>
</comment>
<name>SYE_CHLPB</name>
<proteinExistence type="inferred from homology"/>
<accession>B3EMG1</accession>
<reference key="1">
    <citation type="submission" date="2008-06" db="EMBL/GenBank/DDBJ databases">
        <title>Complete sequence of Chlorobium phaeobacteroides BS1.</title>
        <authorList>
            <consortium name="US DOE Joint Genome Institute"/>
            <person name="Lucas S."/>
            <person name="Copeland A."/>
            <person name="Lapidus A."/>
            <person name="Glavina del Rio T."/>
            <person name="Dalin E."/>
            <person name="Tice H."/>
            <person name="Bruce D."/>
            <person name="Goodwin L."/>
            <person name="Pitluck S."/>
            <person name="Schmutz J."/>
            <person name="Larimer F."/>
            <person name="Land M."/>
            <person name="Hauser L."/>
            <person name="Kyrpides N."/>
            <person name="Ovchinnikova G."/>
            <person name="Li T."/>
            <person name="Liu Z."/>
            <person name="Zhao F."/>
            <person name="Overmann J."/>
            <person name="Bryant D.A."/>
            <person name="Richardson P."/>
        </authorList>
    </citation>
    <scope>NUCLEOTIDE SEQUENCE [LARGE SCALE GENOMIC DNA]</scope>
    <source>
        <strain>BS1</strain>
    </source>
</reference>
<evidence type="ECO:0000255" key="1">
    <source>
        <dbReference type="HAMAP-Rule" id="MF_00022"/>
    </source>
</evidence>
<keyword id="KW-0030">Aminoacyl-tRNA synthetase</keyword>
<keyword id="KW-0067">ATP-binding</keyword>
<keyword id="KW-0963">Cytoplasm</keyword>
<keyword id="KW-0436">Ligase</keyword>
<keyword id="KW-0547">Nucleotide-binding</keyword>
<keyword id="KW-0648">Protein biosynthesis</keyword>
<gene>
    <name evidence="1" type="primary">gltX</name>
    <name type="ordered locus">Cphamn1_1989</name>
</gene>
<dbReference type="EC" id="6.1.1.17" evidence="1"/>
<dbReference type="EMBL" id="CP001101">
    <property type="protein sequence ID" value="ACE04900.1"/>
    <property type="molecule type" value="Genomic_DNA"/>
</dbReference>
<dbReference type="SMR" id="B3EMG1"/>
<dbReference type="STRING" id="331678.Cphamn1_1989"/>
<dbReference type="KEGG" id="cpb:Cphamn1_1989"/>
<dbReference type="eggNOG" id="COG0008">
    <property type="taxonomic scope" value="Bacteria"/>
</dbReference>
<dbReference type="HOGENOM" id="CLU_015768_6_3_10"/>
<dbReference type="OrthoDB" id="9807503at2"/>
<dbReference type="GO" id="GO:0005737">
    <property type="term" value="C:cytoplasm"/>
    <property type="evidence" value="ECO:0007669"/>
    <property type="project" value="UniProtKB-SubCell"/>
</dbReference>
<dbReference type="GO" id="GO:0005524">
    <property type="term" value="F:ATP binding"/>
    <property type="evidence" value="ECO:0007669"/>
    <property type="project" value="UniProtKB-UniRule"/>
</dbReference>
<dbReference type="GO" id="GO:0004818">
    <property type="term" value="F:glutamate-tRNA ligase activity"/>
    <property type="evidence" value="ECO:0007669"/>
    <property type="project" value="UniProtKB-UniRule"/>
</dbReference>
<dbReference type="GO" id="GO:0000049">
    <property type="term" value="F:tRNA binding"/>
    <property type="evidence" value="ECO:0007669"/>
    <property type="project" value="InterPro"/>
</dbReference>
<dbReference type="GO" id="GO:0008270">
    <property type="term" value="F:zinc ion binding"/>
    <property type="evidence" value="ECO:0007669"/>
    <property type="project" value="InterPro"/>
</dbReference>
<dbReference type="GO" id="GO:0006424">
    <property type="term" value="P:glutamyl-tRNA aminoacylation"/>
    <property type="evidence" value="ECO:0007669"/>
    <property type="project" value="UniProtKB-UniRule"/>
</dbReference>
<dbReference type="CDD" id="cd00808">
    <property type="entry name" value="GluRS_core"/>
    <property type="match status" value="1"/>
</dbReference>
<dbReference type="FunFam" id="3.40.50.620:FF:000045">
    <property type="entry name" value="Glutamate--tRNA ligase, mitochondrial"/>
    <property type="match status" value="1"/>
</dbReference>
<dbReference type="Gene3D" id="1.10.10.350">
    <property type="match status" value="1"/>
</dbReference>
<dbReference type="Gene3D" id="3.40.50.620">
    <property type="entry name" value="HUPs"/>
    <property type="match status" value="1"/>
</dbReference>
<dbReference type="HAMAP" id="MF_00022">
    <property type="entry name" value="Glu_tRNA_synth_type1"/>
    <property type="match status" value="1"/>
</dbReference>
<dbReference type="InterPro" id="IPR045462">
    <property type="entry name" value="aa-tRNA-synth_I_cd-bd"/>
</dbReference>
<dbReference type="InterPro" id="IPR020751">
    <property type="entry name" value="aa-tRNA-synth_I_codon-bd_sub2"/>
</dbReference>
<dbReference type="InterPro" id="IPR001412">
    <property type="entry name" value="aa-tRNA-synth_I_CS"/>
</dbReference>
<dbReference type="InterPro" id="IPR008925">
    <property type="entry name" value="aa_tRNA-synth_I_cd-bd_sf"/>
</dbReference>
<dbReference type="InterPro" id="IPR004527">
    <property type="entry name" value="Glu-tRNA-ligase_bac/mito"/>
</dbReference>
<dbReference type="InterPro" id="IPR000924">
    <property type="entry name" value="Glu/Gln-tRNA-synth"/>
</dbReference>
<dbReference type="InterPro" id="IPR020058">
    <property type="entry name" value="Glu/Gln-tRNA-synth_Ib_cat-dom"/>
</dbReference>
<dbReference type="InterPro" id="IPR049940">
    <property type="entry name" value="GluQ/Sye"/>
</dbReference>
<dbReference type="InterPro" id="IPR033910">
    <property type="entry name" value="GluRS_core"/>
</dbReference>
<dbReference type="InterPro" id="IPR014729">
    <property type="entry name" value="Rossmann-like_a/b/a_fold"/>
</dbReference>
<dbReference type="NCBIfam" id="TIGR00464">
    <property type="entry name" value="gltX_bact"/>
    <property type="match status" value="1"/>
</dbReference>
<dbReference type="PANTHER" id="PTHR43311">
    <property type="entry name" value="GLUTAMATE--TRNA LIGASE"/>
    <property type="match status" value="1"/>
</dbReference>
<dbReference type="PANTHER" id="PTHR43311:SF2">
    <property type="entry name" value="GLUTAMATE--TRNA LIGASE, MITOCHONDRIAL-RELATED"/>
    <property type="match status" value="1"/>
</dbReference>
<dbReference type="Pfam" id="PF19269">
    <property type="entry name" value="Anticodon_2"/>
    <property type="match status" value="1"/>
</dbReference>
<dbReference type="Pfam" id="PF00749">
    <property type="entry name" value="tRNA-synt_1c"/>
    <property type="match status" value="1"/>
</dbReference>
<dbReference type="PRINTS" id="PR00987">
    <property type="entry name" value="TRNASYNTHGLU"/>
</dbReference>
<dbReference type="SUPFAM" id="SSF48163">
    <property type="entry name" value="An anticodon-binding domain of class I aminoacyl-tRNA synthetases"/>
    <property type="match status" value="1"/>
</dbReference>
<dbReference type="SUPFAM" id="SSF52374">
    <property type="entry name" value="Nucleotidylyl transferase"/>
    <property type="match status" value="1"/>
</dbReference>
<dbReference type="PROSITE" id="PS00178">
    <property type="entry name" value="AA_TRNA_LIGASE_I"/>
    <property type="match status" value="1"/>
</dbReference>
<organism>
    <name type="scientific">Chlorobium phaeobacteroides (strain BS1)</name>
    <dbReference type="NCBI Taxonomy" id="331678"/>
    <lineage>
        <taxon>Bacteria</taxon>
        <taxon>Pseudomonadati</taxon>
        <taxon>Chlorobiota</taxon>
        <taxon>Chlorobiia</taxon>
        <taxon>Chlorobiales</taxon>
        <taxon>Chlorobiaceae</taxon>
        <taxon>Chlorobium/Pelodictyon group</taxon>
        <taxon>Chlorobium</taxon>
    </lineage>
</organism>
<feature type="chain" id="PRO_0000367646" description="Glutamate--tRNA ligase">
    <location>
        <begin position="1"/>
        <end position="503"/>
    </location>
</feature>
<feature type="short sequence motif" description="'HIGH' region" evidence="1">
    <location>
        <begin position="15"/>
        <end position="25"/>
    </location>
</feature>
<feature type="short sequence motif" description="'KMSKS' region" evidence="1">
    <location>
        <begin position="262"/>
        <end position="266"/>
    </location>
</feature>
<feature type="binding site" evidence="1">
    <location>
        <position position="265"/>
    </location>
    <ligand>
        <name>ATP</name>
        <dbReference type="ChEBI" id="CHEBI:30616"/>
    </ligand>
</feature>